<protein>
    <recommendedName>
        <fullName>Uncharacterized lipoprotein MJ0872</fullName>
    </recommendedName>
</protein>
<accession>Q58282</accession>
<proteinExistence type="inferred from homology"/>
<gene>
    <name type="ordered locus">MJ0872</name>
</gene>
<keyword id="KW-1003">Cell membrane</keyword>
<keyword id="KW-0449">Lipoprotein</keyword>
<keyword id="KW-0472">Membrane</keyword>
<keyword id="KW-1185">Reference proteome</keyword>
<keyword id="KW-0732">Signal</keyword>
<feature type="signal peptide" evidence="2">
    <location>
        <begin position="1"/>
        <end position="20"/>
    </location>
</feature>
<feature type="chain" id="PRO_0000014004" description="Uncharacterized lipoprotein MJ0872">
    <location>
        <begin position="21"/>
        <end position="390"/>
    </location>
</feature>
<feature type="domain" description="Fe/B12 periplasmic-binding" evidence="3">
    <location>
        <begin position="104"/>
        <end position="377"/>
    </location>
</feature>
<feature type="lipid moiety-binding region" description="S-archaeol cysteine" evidence="1">
    <location>
        <position position="21"/>
    </location>
</feature>
<reference key="1">
    <citation type="journal article" date="1996" name="Science">
        <title>Complete genome sequence of the methanogenic archaeon, Methanococcus jannaschii.</title>
        <authorList>
            <person name="Bult C.J."/>
            <person name="White O."/>
            <person name="Olsen G.J."/>
            <person name="Zhou L."/>
            <person name="Fleischmann R.D."/>
            <person name="Sutton G.G."/>
            <person name="Blake J.A."/>
            <person name="FitzGerald L.M."/>
            <person name="Clayton R.A."/>
            <person name="Gocayne J.D."/>
            <person name="Kerlavage A.R."/>
            <person name="Dougherty B.A."/>
            <person name="Tomb J.-F."/>
            <person name="Adams M.D."/>
            <person name="Reich C.I."/>
            <person name="Overbeek R."/>
            <person name="Kirkness E.F."/>
            <person name="Weinstock K.G."/>
            <person name="Merrick J.M."/>
            <person name="Glodek A."/>
            <person name="Scott J.L."/>
            <person name="Geoghagen N.S.M."/>
            <person name="Weidman J.F."/>
            <person name="Fuhrmann J.L."/>
            <person name="Nguyen D."/>
            <person name="Utterback T.R."/>
            <person name="Kelley J.M."/>
            <person name="Peterson J.D."/>
            <person name="Sadow P.W."/>
            <person name="Hanna M.C."/>
            <person name="Cotton M.D."/>
            <person name="Roberts K.M."/>
            <person name="Hurst M.A."/>
            <person name="Kaine B.P."/>
            <person name="Borodovsky M."/>
            <person name="Klenk H.-P."/>
            <person name="Fraser C.M."/>
            <person name="Smith H.O."/>
            <person name="Woese C.R."/>
            <person name="Venter J.C."/>
        </authorList>
    </citation>
    <scope>NUCLEOTIDE SEQUENCE [LARGE SCALE GENOMIC DNA]</scope>
    <source>
        <strain>ATCC 43067 / DSM 2661 / JAL-1 / JCM 10045 / NBRC 100440</strain>
    </source>
</reference>
<organism>
    <name type="scientific">Methanocaldococcus jannaschii (strain ATCC 43067 / DSM 2661 / JAL-1 / JCM 10045 / NBRC 100440)</name>
    <name type="common">Methanococcus jannaschii</name>
    <dbReference type="NCBI Taxonomy" id="243232"/>
    <lineage>
        <taxon>Archaea</taxon>
        <taxon>Methanobacteriati</taxon>
        <taxon>Methanobacteriota</taxon>
        <taxon>Methanomada group</taxon>
        <taxon>Methanococci</taxon>
        <taxon>Methanococcales</taxon>
        <taxon>Methanocaldococcaceae</taxon>
        <taxon>Methanocaldococcus</taxon>
    </lineage>
</organism>
<evidence type="ECO:0000255" key="1"/>
<evidence type="ECO:0000255" key="2">
    <source>
        <dbReference type="PROSITE-ProRule" id="PRU00303"/>
    </source>
</evidence>
<evidence type="ECO:0000255" key="3">
    <source>
        <dbReference type="PROSITE-ProRule" id="PRU00344"/>
    </source>
</evidence>
<evidence type="ECO:0000305" key="4"/>
<sequence>MRKLFLLSILMIGVIVAFAGCVEESKTTTQLQQTTQSESQKAETQPKLGVNVVRYAETFKLYPHWDEGYCVVADSVGNKFVLVEGNAKAPNISDGKIIKVPVKRIVTDFYCPIISAADILNAYHHTIVGAPKYAVEKSPKLKELFDEGKVVDIGSPSKGVNYELIVNLTPDIVFLGDWKSEDVVEEKLKELGVTVSRFYTYQEPTYMGRVEWIKFAAAFWGSNAYKKADKWFENVVKVRENILKKVQNVTNEPTVVIFSWSKTKNMPGIYGNDSYYSKMIAEFKGKNVFDDYNRGYQYVDKETFYERAMNADVVILIWFYGDVKTKEDLLKINPNFAEFKAFKTGRFYVSHPDYYVWEARDPAGYMMDFAKMIHPELFGGDDDLKYYYKIK</sequence>
<dbReference type="EMBL" id="L77117">
    <property type="protein sequence ID" value="AAB98880.1"/>
    <property type="status" value="ALT_INIT"/>
    <property type="molecule type" value="Genomic_DNA"/>
</dbReference>
<dbReference type="PIR" id="H64408">
    <property type="entry name" value="H64408"/>
</dbReference>
<dbReference type="RefSeq" id="WP_064496645.1">
    <property type="nucleotide sequence ID" value="NC_000909.1"/>
</dbReference>
<dbReference type="SMR" id="Q58282"/>
<dbReference type="FunCoup" id="Q58282">
    <property type="interactions" value="2"/>
</dbReference>
<dbReference type="STRING" id="243232.MJ_0872"/>
<dbReference type="PaxDb" id="243232-MJ_0872"/>
<dbReference type="EnsemblBacteria" id="AAB98880">
    <property type="protein sequence ID" value="AAB98880"/>
    <property type="gene ID" value="MJ_0872"/>
</dbReference>
<dbReference type="GeneID" id="1451761"/>
<dbReference type="KEGG" id="mja:MJ_0872"/>
<dbReference type="eggNOG" id="arCOG03417">
    <property type="taxonomic scope" value="Archaea"/>
</dbReference>
<dbReference type="HOGENOM" id="CLU_025776_0_0_2"/>
<dbReference type="InParanoid" id="Q58282"/>
<dbReference type="OrthoDB" id="24039at2157"/>
<dbReference type="PhylomeDB" id="Q58282"/>
<dbReference type="Proteomes" id="UP000000805">
    <property type="component" value="Chromosome"/>
</dbReference>
<dbReference type="GO" id="GO:0005886">
    <property type="term" value="C:plasma membrane"/>
    <property type="evidence" value="ECO:0007669"/>
    <property type="project" value="UniProtKB-SubCell"/>
</dbReference>
<dbReference type="CDD" id="cd01141">
    <property type="entry name" value="TroA_d"/>
    <property type="match status" value="1"/>
</dbReference>
<dbReference type="Gene3D" id="3.40.50.1980">
    <property type="entry name" value="Nitrogenase molybdenum iron protein domain"/>
    <property type="match status" value="2"/>
</dbReference>
<dbReference type="InterPro" id="IPR050902">
    <property type="entry name" value="ABC_Transporter_SBP"/>
</dbReference>
<dbReference type="InterPro" id="IPR002491">
    <property type="entry name" value="ABC_transptr_periplasmic_BD"/>
</dbReference>
<dbReference type="PANTHER" id="PTHR30535:SF34">
    <property type="entry name" value="MOLYBDATE-BINDING PROTEIN MOLA"/>
    <property type="match status" value="1"/>
</dbReference>
<dbReference type="PANTHER" id="PTHR30535">
    <property type="entry name" value="VITAMIN B12-BINDING PROTEIN"/>
    <property type="match status" value="1"/>
</dbReference>
<dbReference type="Pfam" id="PF01497">
    <property type="entry name" value="Peripla_BP_2"/>
    <property type="match status" value="1"/>
</dbReference>
<dbReference type="SUPFAM" id="SSF53807">
    <property type="entry name" value="Helical backbone' metal receptor"/>
    <property type="match status" value="1"/>
</dbReference>
<dbReference type="PROSITE" id="PS50983">
    <property type="entry name" value="FE_B12_PBP"/>
    <property type="match status" value="1"/>
</dbReference>
<dbReference type="PROSITE" id="PS51257">
    <property type="entry name" value="PROKAR_LIPOPROTEIN"/>
    <property type="match status" value="1"/>
</dbReference>
<comment type="subcellular location">
    <subcellularLocation>
        <location evidence="2">Cell membrane</location>
        <topology evidence="2">Lipid-anchor</topology>
    </subcellularLocation>
</comment>
<comment type="sequence caution" evidence="4">
    <conflict type="erroneous initiation">
        <sequence resource="EMBL-CDS" id="AAB98880"/>
    </conflict>
</comment>
<name>Y872_METJA</name>